<keyword id="KW-0496">Mitochondrion</keyword>
<keyword id="KW-0507">mRNA processing</keyword>
<keyword id="KW-0508">mRNA splicing</keyword>
<keyword id="KW-0677">Repeat</keyword>
<keyword id="KW-0809">Transit peptide</keyword>
<evidence type="ECO:0000250" key="1">
    <source>
        <dbReference type="UniProtKB" id="P48237"/>
    </source>
</evidence>
<evidence type="ECO:0000255" key="2"/>
<evidence type="ECO:0000255" key="3">
    <source>
        <dbReference type="PROSITE-ProRule" id="PRU00708"/>
    </source>
</evidence>
<evidence type="ECO:0000305" key="4"/>
<proteinExistence type="inferred from homology"/>
<comment type="function">
    <text evidence="1">Regulates mitochondrial small subunit maturation by controlling 15S rRNA 5'-end processing. Localizes to the 5' precursor of the 15S rRNA in a position that is subsequently occupied by mS47 in the mature yeast mtSSU. Uses structure and sequence-specific RNA recognition, binding to a single-stranded region of the precursor and specifically recognizing bases -6 to -1. The exchange of Ccm1 for mS47 is coupled to the irreversible removal of precursor rRNA that is accompanied by conformational changes of the mitoribosomal proteins uS5m and mS26. These conformational changes signal completion of 5'-end rRNA processing through protection of the mature 5'-end of the 15S rRNA and stabilization of mS47. The removal of the 5' precursor together with the dissociation of Ccm1 may be catalyzed by the 5'-3' exoribonuclease Pet127. Involved in the specific removal of group I introns in mitochondrial encoded transcripts.</text>
</comment>
<comment type="subunit">
    <text evidence="1">Binds to mitochondrial small subunit 15S rRNA.</text>
</comment>
<comment type="subcellular location">
    <subcellularLocation>
        <location evidence="1">Mitochondrion</location>
    </subcellularLocation>
</comment>
<comment type="miscellaneous">
    <text evidence="1">Involved in mitochondrial-nuclear incompatibility, a major determinant in reproductive isolation between species, through hybrid incompatibility of Ccm1 and its interacting partner 15S rRNA between yeast species.</text>
</comment>
<comment type="similarity">
    <text evidence="4">Belongs to the CCM1 family.</text>
</comment>
<reference key="1">
    <citation type="journal article" date="2007" name="Proc. Natl. Acad. Sci. U.S.A.">
        <title>Genome sequencing and comparative analysis of Saccharomyces cerevisiae strain YJM789.</title>
        <authorList>
            <person name="Wei W."/>
            <person name="McCusker J.H."/>
            <person name="Hyman R.W."/>
            <person name="Jones T."/>
            <person name="Ning Y."/>
            <person name="Cao Z."/>
            <person name="Gu Z."/>
            <person name="Bruno D."/>
            <person name="Miranda M."/>
            <person name="Nguyen M."/>
            <person name="Wilhelmy J."/>
            <person name="Komp C."/>
            <person name="Tamse R."/>
            <person name="Wang X."/>
            <person name="Jia P."/>
            <person name="Luedi P."/>
            <person name="Oefner P.J."/>
            <person name="David L."/>
            <person name="Dietrich F.S."/>
            <person name="Li Y."/>
            <person name="Davis R.W."/>
            <person name="Steinmetz L.M."/>
        </authorList>
    </citation>
    <scope>NUCLEOTIDE SEQUENCE [LARGE SCALE GENOMIC DNA]</scope>
    <source>
        <strain>YJM789</strain>
    </source>
</reference>
<feature type="transit peptide" description="Mitochondrion" evidence="2">
    <location>
        <begin position="1"/>
        <end position="76"/>
    </location>
</feature>
<feature type="chain" id="PRO_0000402273" description="Mitochondrial 15S rRNA processing factor CCM1" evidence="2">
    <location>
        <begin position="77"/>
        <end position="864"/>
    </location>
</feature>
<feature type="repeat" description="PPR 1" evidence="3">
    <location>
        <begin position="319"/>
        <end position="353"/>
    </location>
</feature>
<feature type="repeat" description="PPR 2" evidence="3">
    <location>
        <begin position="356"/>
        <end position="390"/>
    </location>
</feature>
<sequence length="864" mass="101446">MYMARCGPKNNVLCFPFQLSFLFSKRLINKRFKYTLQTEDEKDMMGSLSKNKIITPEDVEFKLAQLREFSNTLKERIHNTKSVNSDGHQSNSIAPISEDSRNVNVTKISSVPNEEKSKNLSDLIHSSFLEKMDHLVPKVIRERVADDDILAKNLFDRSHSNWAPVIDRLYVSEKRFMDIDSREFSVWLNGTVKYLPFHSILHLDEMLLEQINGDVVKFNTHMYECIFNNLGNLKPTNFNQDGTNDKVILKMKELLERYDKALKITEERINKKEGFPSKVPKMTQAILNNCLKYSTKCSSFHDMDYFITKFRDDYGITPNKQNLTTVIQFYSRKEMTKQAWNTFDTMKFLSTKHFPDICTYNTMLRICEKERNFPKALDLFQEIQDHNIKPTTNTYIMMARVLASSSSNAVVSEGKSDSLRLLGWKYLHELEDKNLYRHKKDDLNLFLAMMVLAAFDGDIELSRALYYLFIAKKYKTLCANWKGNILVDQDTIWKSTLMPEMLNYLMLAYARFDPRNLPVLSGYEKGIELRRKFLREFDSSMRLDDTDKLVKFKLPFLPISDLNSEAQVLAESNAIWSFNLENGGTRNTLTSSNEAALEDIKKYRQLLDSFAQEAEDFNEFKFKVMYEVTKMQRESINVNVFNKISLHTYLSIPINLKQQKEFLRRLTFFTFQQHEFEAVIKRLYEGYRNIPSSHTRDQNSISTEAISVSKPETTEDLNLIMHDIWYITCLRHKIMMDTTLYELVMKAAIEFQNEDLAKKVWNDRGKFRTTVPFLKMDQRIRIAKDQKFAHLMVEFFTKQGKYSDAIAIILSSKNRFNWTYSMVRNLHKALEEIEDRNSVEILLDVVNKKSHAKALKWEEQELNM</sequence>
<protein>
    <recommendedName>
        <fullName>Mitochondrial 15S rRNA processing factor CCM1</fullName>
    </recommendedName>
    <alternativeName>
        <fullName>COB and COX1 mRNA maturation protein 1</fullName>
    </alternativeName>
    <alternativeName>
        <fullName>Degradation of mitochondrial rRNA protein 1</fullName>
    </alternativeName>
    <alternativeName>
        <fullName>Required for respiratory growth protein 2</fullName>
    </alternativeName>
</protein>
<dbReference type="EMBL" id="AAFW02000100">
    <property type="protein sequence ID" value="EDN61739.1"/>
    <property type="molecule type" value="Genomic_DNA"/>
</dbReference>
<dbReference type="SMR" id="A6ZUG2"/>
<dbReference type="HOGENOM" id="CLU_334653_0_0_1"/>
<dbReference type="OrthoDB" id="41177at4893"/>
<dbReference type="Proteomes" id="UP000007060">
    <property type="component" value="Unassembled WGS sequence"/>
</dbReference>
<dbReference type="GO" id="GO:0005739">
    <property type="term" value="C:mitochondrion"/>
    <property type="evidence" value="ECO:0007669"/>
    <property type="project" value="UniProtKB-SubCell"/>
</dbReference>
<dbReference type="GO" id="GO:0031930">
    <property type="term" value="P:mitochondria-nucleus signaling pathway"/>
    <property type="evidence" value="ECO:0007669"/>
    <property type="project" value="TreeGrafter"/>
</dbReference>
<dbReference type="GO" id="GO:0006397">
    <property type="term" value="P:mRNA processing"/>
    <property type="evidence" value="ECO:0007669"/>
    <property type="project" value="UniProtKB-KW"/>
</dbReference>
<dbReference type="GO" id="GO:0008380">
    <property type="term" value="P:RNA splicing"/>
    <property type="evidence" value="ECO:0007669"/>
    <property type="project" value="UniProtKB-KW"/>
</dbReference>
<dbReference type="Gene3D" id="1.25.40.10">
    <property type="entry name" value="Tetratricopeptide repeat domain"/>
    <property type="match status" value="1"/>
</dbReference>
<dbReference type="InterPro" id="IPR002885">
    <property type="entry name" value="Pentatricopeptide_rpt"/>
</dbReference>
<dbReference type="InterPro" id="IPR011990">
    <property type="entry name" value="TPR-like_helical_dom_sf"/>
</dbReference>
<dbReference type="NCBIfam" id="TIGR00756">
    <property type="entry name" value="PPR"/>
    <property type="match status" value="1"/>
</dbReference>
<dbReference type="PANTHER" id="PTHR47936:SF1">
    <property type="entry name" value="PENTATRICOPEPTIDE REPEAT-CONTAINING PROTEIN GUN1, CHLOROPLASTIC"/>
    <property type="match status" value="1"/>
</dbReference>
<dbReference type="PANTHER" id="PTHR47936">
    <property type="entry name" value="PPR_LONG DOMAIN-CONTAINING PROTEIN"/>
    <property type="match status" value="1"/>
</dbReference>
<dbReference type="Pfam" id="PF13041">
    <property type="entry name" value="PPR_2"/>
    <property type="match status" value="1"/>
</dbReference>
<dbReference type="PROSITE" id="PS51375">
    <property type="entry name" value="PPR"/>
    <property type="match status" value="2"/>
</dbReference>
<gene>
    <name type="primary">CCM1</name>
    <name type="synonym">DMR1</name>
    <name type="synonym">RRG2</name>
    <name type="ORF">SCY_2045</name>
</gene>
<accession>A6ZUG2</accession>
<organism>
    <name type="scientific">Saccharomyces cerevisiae (strain YJM789)</name>
    <name type="common">Baker's yeast</name>
    <dbReference type="NCBI Taxonomy" id="307796"/>
    <lineage>
        <taxon>Eukaryota</taxon>
        <taxon>Fungi</taxon>
        <taxon>Dikarya</taxon>
        <taxon>Ascomycota</taxon>
        <taxon>Saccharomycotina</taxon>
        <taxon>Saccharomycetes</taxon>
        <taxon>Saccharomycetales</taxon>
        <taxon>Saccharomycetaceae</taxon>
        <taxon>Saccharomyces</taxon>
    </lineage>
</organism>
<name>CCM1_YEAS7</name>